<organism>
    <name type="scientific">Paraburkholderia phytofirmans (strain DSM 17436 / LMG 22146 / PsJN)</name>
    <name type="common">Burkholderia phytofirmans</name>
    <dbReference type="NCBI Taxonomy" id="398527"/>
    <lineage>
        <taxon>Bacteria</taxon>
        <taxon>Pseudomonadati</taxon>
        <taxon>Pseudomonadota</taxon>
        <taxon>Betaproteobacteria</taxon>
        <taxon>Burkholderiales</taxon>
        <taxon>Burkholderiaceae</taxon>
        <taxon>Paraburkholderia</taxon>
    </lineage>
</organism>
<gene>
    <name evidence="1" type="primary">nbaC</name>
    <name type="ordered locus">Bphyt_1471</name>
</gene>
<dbReference type="EC" id="1.13.11.6" evidence="1"/>
<dbReference type="EMBL" id="CP001052">
    <property type="protein sequence ID" value="ACD15886.1"/>
    <property type="molecule type" value="Genomic_DNA"/>
</dbReference>
<dbReference type="RefSeq" id="WP_012432500.1">
    <property type="nucleotide sequence ID" value="NC_010681.1"/>
</dbReference>
<dbReference type="SMR" id="B2T2S5"/>
<dbReference type="STRING" id="398527.Bphyt_1471"/>
<dbReference type="KEGG" id="bpy:Bphyt_1471"/>
<dbReference type="eggNOG" id="COG4101">
    <property type="taxonomic scope" value="Bacteria"/>
</dbReference>
<dbReference type="HOGENOM" id="CLU_095765_0_0_4"/>
<dbReference type="OrthoDB" id="5002379at2"/>
<dbReference type="UniPathway" id="UPA00253">
    <property type="reaction ID" value="UER00330"/>
</dbReference>
<dbReference type="Proteomes" id="UP000001739">
    <property type="component" value="Chromosome 1"/>
</dbReference>
<dbReference type="GO" id="GO:0000334">
    <property type="term" value="F:3-hydroxyanthranilate 3,4-dioxygenase activity"/>
    <property type="evidence" value="ECO:0007669"/>
    <property type="project" value="UniProtKB-UniRule"/>
</dbReference>
<dbReference type="GO" id="GO:0008198">
    <property type="term" value="F:ferrous iron binding"/>
    <property type="evidence" value="ECO:0007669"/>
    <property type="project" value="UniProtKB-UniRule"/>
</dbReference>
<dbReference type="GO" id="GO:0043420">
    <property type="term" value="P:anthranilate metabolic process"/>
    <property type="evidence" value="ECO:0007669"/>
    <property type="project" value="UniProtKB-UniRule"/>
</dbReference>
<dbReference type="GO" id="GO:0006569">
    <property type="term" value="P:L-tryptophan catabolic process"/>
    <property type="evidence" value="ECO:0007669"/>
    <property type="project" value="UniProtKB-UniRule"/>
</dbReference>
<dbReference type="GO" id="GO:0009435">
    <property type="term" value="P:NAD biosynthetic process"/>
    <property type="evidence" value="ECO:0007669"/>
    <property type="project" value="UniProtKB-UniPathway"/>
</dbReference>
<dbReference type="GO" id="GO:0019805">
    <property type="term" value="P:quinolinate biosynthetic process"/>
    <property type="evidence" value="ECO:0007669"/>
    <property type="project" value="UniProtKB-UniRule"/>
</dbReference>
<dbReference type="CDD" id="cd06123">
    <property type="entry name" value="cupin_HAO"/>
    <property type="match status" value="1"/>
</dbReference>
<dbReference type="Gene3D" id="2.60.120.10">
    <property type="entry name" value="Jelly Rolls"/>
    <property type="match status" value="1"/>
</dbReference>
<dbReference type="HAMAP" id="MF_00825">
    <property type="entry name" value="3_HAO"/>
    <property type="match status" value="1"/>
</dbReference>
<dbReference type="InterPro" id="IPR010329">
    <property type="entry name" value="3hydroanth_dOase"/>
</dbReference>
<dbReference type="InterPro" id="IPR014710">
    <property type="entry name" value="RmlC-like_jellyroll"/>
</dbReference>
<dbReference type="InterPro" id="IPR011051">
    <property type="entry name" value="RmlC_Cupin_sf"/>
</dbReference>
<dbReference type="NCBIfam" id="TIGR03037">
    <property type="entry name" value="anthran_nbaC"/>
    <property type="match status" value="1"/>
</dbReference>
<dbReference type="NCBIfam" id="NF009763">
    <property type="entry name" value="PRK13264.1"/>
    <property type="match status" value="1"/>
</dbReference>
<dbReference type="PANTHER" id="PTHR15497">
    <property type="entry name" value="3-HYDROXYANTHRANILATE 3,4-DIOXYGENASE"/>
    <property type="match status" value="1"/>
</dbReference>
<dbReference type="PANTHER" id="PTHR15497:SF1">
    <property type="entry name" value="3-HYDROXYANTHRANILATE 3,4-DIOXYGENASE"/>
    <property type="match status" value="1"/>
</dbReference>
<dbReference type="Pfam" id="PF06052">
    <property type="entry name" value="3-HAO"/>
    <property type="match status" value="1"/>
</dbReference>
<dbReference type="SUPFAM" id="SSF51182">
    <property type="entry name" value="RmlC-like cupins"/>
    <property type="match status" value="1"/>
</dbReference>
<accession>B2T2S5</accession>
<reference key="1">
    <citation type="journal article" date="2011" name="J. Bacteriol.">
        <title>Complete genome sequence of the plant growth-promoting endophyte Burkholderia phytofirmans strain PsJN.</title>
        <authorList>
            <person name="Weilharter A."/>
            <person name="Mitter B."/>
            <person name="Shin M.V."/>
            <person name="Chain P.S."/>
            <person name="Nowak J."/>
            <person name="Sessitsch A."/>
        </authorList>
    </citation>
    <scope>NUCLEOTIDE SEQUENCE [LARGE SCALE GENOMIC DNA]</scope>
    <source>
        <strain>DSM 17436 / LMG 22146 / PsJN</strain>
    </source>
</reference>
<feature type="chain" id="PRO_1000134549" description="3-hydroxyanthranilate 3,4-dioxygenase">
    <location>
        <begin position="1"/>
        <end position="174"/>
    </location>
</feature>
<feature type="binding site" evidence="1">
    <location>
        <position position="47"/>
    </location>
    <ligand>
        <name>O2</name>
        <dbReference type="ChEBI" id="CHEBI:15379"/>
    </ligand>
</feature>
<feature type="binding site" evidence="1">
    <location>
        <position position="51"/>
    </location>
    <ligand>
        <name>Fe cation</name>
        <dbReference type="ChEBI" id="CHEBI:24875"/>
        <label>1</label>
        <note>catalytic</note>
    </ligand>
</feature>
<feature type="binding site" evidence="1">
    <location>
        <position position="57"/>
    </location>
    <ligand>
        <name>Fe cation</name>
        <dbReference type="ChEBI" id="CHEBI:24875"/>
        <label>1</label>
        <note>catalytic</note>
    </ligand>
</feature>
<feature type="binding site" evidence="1">
    <location>
        <position position="57"/>
    </location>
    <ligand>
        <name>substrate</name>
    </ligand>
</feature>
<feature type="binding site" evidence="1">
    <location>
        <position position="95"/>
    </location>
    <ligand>
        <name>Fe cation</name>
        <dbReference type="ChEBI" id="CHEBI:24875"/>
        <label>1</label>
        <note>catalytic</note>
    </ligand>
</feature>
<feature type="binding site" evidence="1">
    <location>
        <position position="99"/>
    </location>
    <ligand>
        <name>substrate</name>
    </ligand>
</feature>
<feature type="binding site" evidence="1">
    <location>
        <position position="110"/>
    </location>
    <ligand>
        <name>substrate</name>
    </ligand>
</feature>
<feature type="binding site" evidence="1">
    <location>
        <position position="125"/>
    </location>
    <ligand>
        <name>Fe cation</name>
        <dbReference type="ChEBI" id="CHEBI:24875"/>
        <label>2</label>
    </ligand>
</feature>
<feature type="binding site" evidence="1">
    <location>
        <position position="128"/>
    </location>
    <ligand>
        <name>Fe cation</name>
        <dbReference type="ChEBI" id="CHEBI:24875"/>
        <label>2</label>
    </ligand>
</feature>
<feature type="binding site" evidence="1">
    <location>
        <position position="162"/>
    </location>
    <ligand>
        <name>Fe cation</name>
        <dbReference type="ChEBI" id="CHEBI:24875"/>
        <label>2</label>
    </ligand>
</feature>
<feature type="binding site" evidence="1">
    <location>
        <position position="165"/>
    </location>
    <ligand>
        <name>Fe cation</name>
        <dbReference type="ChEBI" id="CHEBI:24875"/>
        <label>2</label>
    </ligand>
</feature>
<proteinExistence type="inferred from homology"/>
<sequence length="174" mass="20043">MLTYGKPFNFQRWIDDHAHLLKPPVGNQQVWQDSDFIVTVVGGPNHRTDYHDDPLEEFFYQLRGNAYLHLWIDGKRERVDLKEGDVFLLPPHVRHSPQRPEAGSVCLVIERQRPAGVVDGFEWYCDACGHLVYRVEVQLKSIVSDLPPLFNAFYASEEKRRCGHCGHVHPGKAV</sequence>
<protein>
    <recommendedName>
        <fullName evidence="1">3-hydroxyanthranilate 3,4-dioxygenase</fullName>
        <ecNumber evidence="1">1.13.11.6</ecNumber>
    </recommendedName>
    <alternativeName>
        <fullName evidence="1">3-hydroxyanthranilate oxygenase</fullName>
        <shortName evidence="1">3-HAO</shortName>
    </alternativeName>
    <alternativeName>
        <fullName evidence="1">3-hydroxyanthranilic acid dioxygenase</fullName>
        <shortName evidence="1">HAD</shortName>
    </alternativeName>
</protein>
<keyword id="KW-0223">Dioxygenase</keyword>
<keyword id="KW-0408">Iron</keyword>
<keyword id="KW-0479">Metal-binding</keyword>
<keyword id="KW-0560">Oxidoreductase</keyword>
<keyword id="KW-0662">Pyridine nucleotide biosynthesis</keyword>
<name>3HAO_PARPJ</name>
<evidence type="ECO:0000255" key="1">
    <source>
        <dbReference type="HAMAP-Rule" id="MF_00825"/>
    </source>
</evidence>
<comment type="function">
    <text evidence="1">Catalyzes the oxidative ring opening of 3-hydroxyanthranilate to 2-amino-3-carboxymuconate semialdehyde, which spontaneously cyclizes to quinolinate.</text>
</comment>
<comment type="catalytic activity">
    <reaction evidence="1">
        <text>3-hydroxyanthranilate + O2 = (2Z,4Z)-2-amino-3-carboxymuconate 6-semialdehyde</text>
        <dbReference type="Rhea" id="RHEA:17953"/>
        <dbReference type="ChEBI" id="CHEBI:15379"/>
        <dbReference type="ChEBI" id="CHEBI:36559"/>
        <dbReference type="ChEBI" id="CHEBI:77612"/>
        <dbReference type="EC" id="1.13.11.6"/>
    </reaction>
</comment>
<comment type="cofactor">
    <cofactor evidence="1">
        <name>Fe(2+)</name>
        <dbReference type="ChEBI" id="CHEBI:29033"/>
    </cofactor>
    <text evidence="1">Binds 2 Fe(2+) ions per subunit.</text>
</comment>
<comment type="pathway">
    <text evidence="1">Cofactor biosynthesis; NAD(+) biosynthesis; quinolinate from L-kynurenine: step 3/3.</text>
</comment>
<comment type="subunit">
    <text evidence="1">Homodimer.</text>
</comment>
<comment type="similarity">
    <text evidence="1">Belongs to the 3-HAO family.</text>
</comment>